<keyword id="KW-0963">Cytoplasm</keyword>
<keyword id="KW-0460">Magnesium</keyword>
<keyword id="KW-0479">Metal-binding</keyword>
<keyword id="KW-0548">Nucleotidyltransferase</keyword>
<keyword id="KW-0694">RNA-binding</keyword>
<keyword id="KW-0808">Transferase</keyword>
<evidence type="ECO:0000255" key="1">
    <source>
        <dbReference type="HAMAP-Rule" id="MF_01595"/>
    </source>
</evidence>
<evidence type="ECO:0000256" key="2">
    <source>
        <dbReference type="SAM" id="MobiDB-lite"/>
    </source>
</evidence>
<evidence type="ECO:0000305" key="3"/>
<name>PNP_ECO81</name>
<accession>B7N0U9</accession>
<protein>
    <recommendedName>
        <fullName evidence="1">Polyribonucleotide nucleotidyltransferase</fullName>
        <ecNumber evidence="1">2.7.7.8</ecNumber>
    </recommendedName>
    <alternativeName>
        <fullName evidence="1">Polynucleotide phosphorylase</fullName>
        <shortName evidence="1">PNPase</shortName>
    </alternativeName>
</protein>
<feature type="chain" id="PRO_0000381894" description="Polyribonucleotide nucleotidyltransferase">
    <location>
        <begin position="1"/>
        <end position="711"/>
    </location>
</feature>
<feature type="domain" description="KH" evidence="1">
    <location>
        <begin position="553"/>
        <end position="612"/>
    </location>
</feature>
<feature type="domain" description="S1 motif" evidence="1">
    <location>
        <begin position="622"/>
        <end position="690"/>
    </location>
</feature>
<feature type="region of interest" description="Disordered" evidence="2">
    <location>
        <begin position="689"/>
        <end position="711"/>
    </location>
</feature>
<feature type="compositionally biased region" description="Low complexity" evidence="2">
    <location>
        <begin position="694"/>
        <end position="711"/>
    </location>
</feature>
<feature type="binding site" evidence="1">
    <location>
        <position position="486"/>
    </location>
    <ligand>
        <name>Mg(2+)</name>
        <dbReference type="ChEBI" id="CHEBI:18420"/>
    </ligand>
</feature>
<feature type="binding site" evidence="1">
    <location>
        <position position="492"/>
    </location>
    <ligand>
        <name>Mg(2+)</name>
        <dbReference type="ChEBI" id="CHEBI:18420"/>
    </ligand>
</feature>
<sequence length="711" mass="77115">MLNPIVRKFQYGQHTVTLETGMMARQATAAVMVSMDDTAVFVTVVGQKKAKPGQDFFPLTVNYQERTYAAGRIPGSFFRREGRPSEGETLIARLIDRPIRPLFPEGFVNEVQVIATVVSVNPQVNPDIVAMIGASAALSLSGIPFNGPIGAARVGYINDQYVLNPTQDELKESKLDLVVAGTEAAVLMVESEAELLSEDQMLGAVVFGHEQQQVVIQNINELVKEAGKPRWDWQPEPVNEALNARVAALAEARLSDAYRITDKQERYAQVDVIKSETIATLLAEDETLDENELGEILHAIEKNVVRSRVLAGEPRIDGREKDMIRGLDVRTGVLPRTHGSALFTRGETQALVTATLGTARDAQVLDELMGERTDTFLFHYNFPPYSVGETGMVGSPKRREIGHGRLAKRGVLAVMPDMDKFPYTVRVVSEITESNGSSSMASVCGASLALMDAGVPIKAAVAGIAMGLVKEGDNYVVLSDILGDEDHLGDMDFKVAGSRDGISALQMDIKIEGITKEIMQVALNQAKGARLHILGVMEQAINAPRGDISEFAPRIHTIKINPDKIKDVIGKGGSVIRALTEETGTTIEIEDDGTVKIAATDGEKAKHAIRRIEEITAEIEVGRVYNGKVTRIVDFGAFVAIGGGKEGLVHISQIADKRVEKVTDYLQMGQEVPVKVLEVDRQGRIRLSIKEATEQSQPAAAPEAPAAEQGE</sequence>
<gene>
    <name evidence="1" type="primary">pnp</name>
    <name type="ordered locus">ECED1_3824</name>
</gene>
<proteinExistence type="inferred from homology"/>
<organism>
    <name type="scientific">Escherichia coli O81 (strain ED1a)</name>
    <dbReference type="NCBI Taxonomy" id="585397"/>
    <lineage>
        <taxon>Bacteria</taxon>
        <taxon>Pseudomonadati</taxon>
        <taxon>Pseudomonadota</taxon>
        <taxon>Gammaproteobacteria</taxon>
        <taxon>Enterobacterales</taxon>
        <taxon>Enterobacteriaceae</taxon>
        <taxon>Escherichia</taxon>
    </lineage>
</organism>
<comment type="function">
    <text evidence="1">Involved in mRNA degradation. Catalyzes the phosphorolysis of single-stranded polyribonucleotides processively in the 3'- to 5'-direction.</text>
</comment>
<comment type="catalytic activity">
    <reaction evidence="1">
        <text>RNA(n+1) + phosphate = RNA(n) + a ribonucleoside 5'-diphosphate</text>
        <dbReference type="Rhea" id="RHEA:22096"/>
        <dbReference type="Rhea" id="RHEA-COMP:14527"/>
        <dbReference type="Rhea" id="RHEA-COMP:17342"/>
        <dbReference type="ChEBI" id="CHEBI:43474"/>
        <dbReference type="ChEBI" id="CHEBI:57930"/>
        <dbReference type="ChEBI" id="CHEBI:140395"/>
        <dbReference type="EC" id="2.7.7.8"/>
    </reaction>
</comment>
<comment type="cofactor">
    <cofactor evidence="1">
        <name>Mg(2+)</name>
        <dbReference type="ChEBI" id="CHEBI:18420"/>
    </cofactor>
</comment>
<comment type="subunit">
    <text evidence="1">Component of the RNA degradosome, which is a multiprotein complex involved in RNA processing and mRNA degradation.</text>
</comment>
<comment type="subcellular location">
    <subcellularLocation>
        <location evidence="1">Cytoplasm</location>
    </subcellularLocation>
</comment>
<comment type="similarity">
    <text evidence="1">Belongs to the polyribonucleotide nucleotidyltransferase family.</text>
</comment>
<comment type="sequence caution" evidence="3">
    <conflict type="erroneous initiation">
        <sequence resource="EMBL-CDS" id="CAR09967"/>
    </conflict>
</comment>
<dbReference type="EC" id="2.7.7.8" evidence="1"/>
<dbReference type="EMBL" id="CU928162">
    <property type="protein sequence ID" value="CAR09967.2"/>
    <property type="status" value="ALT_INIT"/>
    <property type="molecule type" value="Genomic_DNA"/>
</dbReference>
<dbReference type="RefSeq" id="WP_001298330.1">
    <property type="nucleotide sequence ID" value="NC_011745.1"/>
</dbReference>
<dbReference type="SMR" id="B7N0U9"/>
<dbReference type="KEGG" id="ecq:ECED1_3824"/>
<dbReference type="HOGENOM" id="CLU_004217_2_2_6"/>
<dbReference type="Proteomes" id="UP000000748">
    <property type="component" value="Chromosome"/>
</dbReference>
<dbReference type="GO" id="GO:0005829">
    <property type="term" value="C:cytosol"/>
    <property type="evidence" value="ECO:0007669"/>
    <property type="project" value="TreeGrafter"/>
</dbReference>
<dbReference type="GO" id="GO:0000175">
    <property type="term" value="F:3'-5'-RNA exonuclease activity"/>
    <property type="evidence" value="ECO:0007669"/>
    <property type="project" value="TreeGrafter"/>
</dbReference>
<dbReference type="GO" id="GO:0000287">
    <property type="term" value="F:magnesium ion binding"/>
    <property type="evidence" value="ECO:0007669"/>
    <property type="project" value="UniProtKB-UniRule"/>
</dbReference>
<dbReference type="GO" id="GO:0004654">
    <property type="term" value="F:polyribonucleotide nucleotidyltransferase activity"/>
    <property type="evidence" value="ECO:0007669"/>
    <property type="project" value="UniProtKB-UniRule"/>
</dbReference>
<dbReference type="GO" id="GO:0003723">
    <property type="term" value="F:RNA binding"/>
    <property type="evidence" value="ECO:0007669"/>
    <property type="project" value="UniProtKB-UniRule"/>
</dbReference>
<dbReference type="GO" id="GO:0006402">
    <property type="term" value="P:mRNA catabolic process"/>
    <property type="evidence" value="ECO:0007669"/>
    <property type="project" value="UniProtKB-UniRule"/>
</dbReference>
<dbReference type="GO" id="GO:0006396">
    <property type="term" value="P:RNA processing"/>
    <property type="evidence" value="ECO:0007669"/>
    <property type="project" value="InterPro"/>
</dbReference>
<dbReference type="CDD" id="cd02393">
    <property type="entry name" value="KH-I_PNPase"/>
    <property type="match status" value="1"/>
</dbReference>
<dbReference type="CDD" id="cd11363">
    <property type="entry name" value="RNase_PH_PNPase_1"/>
    <property type="match status" value="1"/>
</dbReference>
<dbReference type="CDD" id="cd11364">
    <property type="entry name" value="RNase_PH_PNPase_2"/>
    <property type="match status" value="1"/>
</dbReference>
<dbReference type="CDD" id="cd04472">
    <property type="entry name" value="S1_PNPase"/>
    <property type="match status" value="1"/>
</dbReference>
<dbReference type="FunFam" id="2.40.50.140:FF:000023">
    <property type="entry name" value="Polyribonucleotide nucleotidyltransferase"/>
    <property type="match status" value="1"/>
</dbReference>
<dbReference type="FunFam" id="3.30.1370.10:FF:000001">
    <property type="entry name" value="Polyribonucleotide nucleotidyltransferase"/>
    <property type="match status" value="1"/>
</dbReference>
<dbReference type="FunFam" id="3.30.230.70:FF:000001">
    <property type="entry name" value="Polyribonucleotide nucleotidyltransferase"/>
    <property type="match status" value="1"/>
</dbReference>
<dbReference type="FunFam" id="3.30.230.70:FF:000002">
    <property type="entry name" value="Polyribonucleotide nucleotidyltransferase"/>
    <property type="match status" value="1"/>
</dbReference>
<dbReference type="Gene3D" id="3.30.230.70">
    <property type="entry name" value="GHMP Kinase, N-terminal domain"/>
    <property type="match status" value="2"/>
</dbReference>
<dbReference type="Gene3D" id="3.30.1370.10">
    <property type="entry name" value="K Homology domain, type 1"/>
    <property type="match status" value="1"/>
</dbReference>
<dbReference type="Gene3D" id="2.40.50.140">
    <property type="entry name" value="Nucleic acid-binding proteins"/>
    <property type="match status" value="1"/>
</dbReference>
<dbReference type="HAMAP" id="MF_01595">
    <property type="entry name" value="PNPase"/>
    <property type="match status" value="1"/>
</dbReference>
<dbReference type="InterPro" id="IPR001247">
    <property type="entry name" value="ExoRNase_PH_dom1"/>
</dbReference>
<dbReference type="InterPro" id="IPR015847">
    <property type="entry name" value="ExoRNase_PH_dom2"/>
</dbReference>
<dbReference type="InterPro" id="IPR036345">
    <property type="entry name" value="ExoRNase_PH_dom2_sf"/>
</dbReference>
<dbReference type="InterPro" id="IPR004087">
    <property type="entry name" value="KH_dom"/>
</dbReference>
<dbReference type="InterPro" id="IPR004088">
    <property type="entry name" value="KH_dom_type_1"/>
</dbReference>
<dbReference type="InterPro" id="IPR036612">
    <property type="entry name" value="KH_dom_type_1_sf"/>
</dbReference>
<dbReference type="InterPro" id="IPR012340">
    <property type="entry name" value="NA-bd_OB-fold"/>
</dbReference>
<dbReference type="InterPro" id="IPR012162">
    <property type="entry name" value="PNPase"/>
</dbReference>
<dbReference type="InterPro" id="IPR027408">
    <property type="entry name" value="PNPase/RNase_PH_dom_sf"/>
</dbReference>
<dbReference type="InterPro" id="IPR015848">
    <property type="entry name" value="PNPase_PH_RNA-bd_bac/org-type"/>
</dbReference>
<dbReference type="InterPro" id="IPR036456">
    <property type="entry name" value="PNPase_PH_RNA-bd_sf"/>
</dbReference>
<dbReference type="InterPro" id="IPR020568">
    <property type="entry name" value="Ribosomal_Su5_D2-typ_SF"/>
</dbReference>
<dbReference type="InterPro" id="IPR003029">
    <property type="entry name" value="S1_domain"/>
</dbReference>
<dbReference type="NCBIfam" id="TIGR03591">
    <property type="entry name" value="polynuc_phos"/>
    <property type="match status" value="1"/>
</dbReference>
<dbReference type="NCBIfam" id="NF008805">
    <property type="entry name" value="PRK11824.1"/>
    <property type="match status" value="1"/>
</dbReference>
<dbReference type="PANTHER" id="PTHR11252">
    <property type="entry name" value="POLYRIBONUCLEOTIDE NUCLEOTIDYLTRANSFERASE"/>
    <property type="match status" value="1"/>
</dbReference>
<dbReference type="PANTHER" id="PTHR11252:SF0">
    <property type="entry name" value="POLYRIBONUCLEOTIDE NUCLEOTIDYLTRANSFERASE 1, MITOCHONDRIAL"/>
    <property type="match status" value="1"/>
</dbReference>
<dbReference type="Pfam" id="PF00013">
    <property type="entry name" value="KH_1"/>
    <property type="match status" value="1"/>
</dbReference>
<dbReference type="Pfam" id="PF03726">
    <property type="entry name" value="PNPase"/>
    <property type="match status" value="1"/>
</dbReference>
<dbReference type="Pfam" id="PF01138">
    <property type="entry name" value="RNase_PH"/>
    <property type="match status" value="2"/>
</dbReference>
<dbReference type="Pfam" id="PF03725">
    <property type="entry name" value="RNase_PH_C"/>
    <property type="match status" value="2"/>
</dbReference>
<dbReference type="Pfam" id="PF00575">
    <property type="entry name" value="S1"/>
    <property type="match status" value="1"/>
</dbReference>
<dbReference type="PIRSF" id="PIRSF005499">
    <property type="entry name" value="PNPase"/>
    <property type="match status" value="1"/>
</dbReference>
<dbReference type="SMART" id="SM00322">
    <property type="entry name" value="KH"/>
    <property type="match status" value="1"/>
</dbReference>
<dbReference type="SMART" id="SM00316">
    <property type="entry name" value="S1"/>
    <property type="match status" value="1"/>
</dbReference>
<dbReference type="SUPFAM" id="SSF54791">
    <property type="entry name" value="Eukaryotic type KH-domain (KH-domain type I)"/>
    <property type="match status" value="1"/>
</dbReference>
<dbReference type="SUPFAM" id="SSF50249">
    <property type="entry name" value="Nucleic acid-binding proteins"/>
    <property type="match status" value="1"/>
</dbReference>
<dbReference type="SUPFAM" id="SSF46915">
    <property type="entry name" value="Polynucleotide phosphorylase/guanosine pentaphosphate synthase (PNPase/GPSI), domain 3"/>
    <property type="match status" value="1"/>
</dbReference>
<dbReference type="SUPFAM" id="SSF55666">
    <property type="entry name" value="Ribonuclease PH domain 2-like"/>
    <property type="match status" value="2"/>
</dbReference>
<dbReference type="SUPFAM" id="SSF54211">
    <property type="entry name" value="Ribosomal protein S5 domain 2-like"/>
    <property type="match status" value="2"/>
</dbReference>
<dbReference type="PROSITE" id="PS50084">
    <property type="entry name" value="KH_TYPE_1"/>
    <property type="match status" value="1"/>
</dbReference>
<dbReference type="PROSITE" id="PS50126">
    <property type="entry name" value="S1"/>
    <property type="match status" value="1"/>
</dbReference>
<reference key="1">
    <citation type="journal article" date="2009" name="PLoS Genet.">
        <title>Organised genome dynamics in the Escherichia coli species results in highly diverse adaptive paths.</title>
        <authorList>
            <person name="Touchon M."/>
            <person name="Hoede C."/>
            <person name="Tenaillon O."/>
            <person name="Barbe V."/>
            <person name="Baeriswyl S."/>
            <person name="Bidet P."/>
            <person name="Bingen E."/>
            <person name="Bonacorsi S."/>
            <person name="Bouchier C."/>
            <person name="Bouvet O."/>
            <person name="Calteau A."/>
            <person name="Chiapello H."/>
            <person name="Clermont O."/>
            <person name="Cruveiller S."/>
            <person name="Danchin A."/>
            <person name="Diard M."/>
            <person name="Dossat C."/>
            <person name="Karoui M.E."/>
            <person name="Frapy E."/>
            <person name="Garry L."/>
            <person name="Ghigo J.M."/>
            <person name="Gilles A.M."/>
            <person name="Johnson J."/>
            <person name="Le Bouguenec C."/>
            <person name="Lescat M."/>
            <person name="Mangenot S."/>
            <person name="Martinez-Jehanne V."/>
            <person name="Matic I."/>
            <person name="Nassif X."/>
            <person name="Oztas S."/>
            <person name="Petit M.A."/>
            <person name="Pichon C."/>
            <person name="Rouy Z."/>
            <person name="Ruf C.S."/>
            <person name="Schneider D."/>
            <person name="Tourret J."/>
            <person name="Vacherie B."/>
            <person name="Vallenet D."/>
            <person name="Medigue C."/>
            <person name="Rocha E.P.C."/>
            <person name="Denamur E."/>
        </authorList>
    </citation>
    <scope>NUCLEOTIDE SEQUENCE [LARGE SCALE GENOMIC DNA]</scope>
    <source>
        <strain>ED1a</strain>
    </source>
</reference>